<accession>Q38669</accession>
<accession>Q7PCD9</accession>
<comment type="similarity">
    <text evidence="1">Belongs to the ninH family.</text>
</comment>
<organismHost>
    <name type="scientific">Salmonella typhimurium</name>
    <dbReference type="NCBI Taxonomy" id="90371"/>
</organismHost>
<sequence length="67" mass="7899">MTHTVKTIPDMLIETYGNQTEVARRLSCHRNTVRRYLYDKEARYHAIVNGVLMIHQGGRGIYDRNQH</sequence>
<gene>
    <name type="primary">ninH</name>
</gene>
<feature type="chain" id="PRO_0000077633" description="Protein ninH">
    <location>
        <begin position="1"/>
        <end position="67"/>
    </location>
</feature>
<evidence type="ECO:0000305" key="1"/>
<proteinExistence type="inferred from homology"/>
<organism>
    <name type="scientific">Salmonella phage P22</name>
    <name type="common">Bacteriophage P22</name>
    <dbReference type="NCBI Taxonomy" id="10754"/>
    <lineage>
        <taxon>Viruses</taxon>
        <taxon>Duplodnaviria</taxon>
        <taxon>Heunggongvirae</taxon>
        <taxon>Uroviricota</taxon>
        <taxon>Caudoviricetes</taxon>
        <taxon>Lederbergvirus</taxon>
    </lineage>
</organism>
<dbReference type="EMBL" id="X78401">
    <property type="protein sequence ID" value="CAA55165.1"/>
    <property type="molecule type" value="Genomic_DNA"/>
</dbReference>
<dbReference type="EMBL" id="AF217253">
    <property type="protein sequence ID" value="AAF75037.1"/>
    <property type="molecule type" value="Genomic_DNA"/>
</dbReference>
<dbReference type="EMBL" id="BK000583">
    <property type="protein sequence ID" value="DAA01035.1"/>
    <property type="molecule type" value="Genomic_DNA"/>
</dbReference>
<dbReference type="RefSeq" id="NP_059619.1">
    <property type="nucleotide sequence ID" value="NC_002371.2"/>
</dbReference>
<dbReference type="GeneID" id="1262814"/>
<dbReference type="KEGG" id="vg:1262814"/>
<dbReference type="OrthoDB" id="21777at10239"/>
<dbReference type="Proteomes" id="UP000001795">
    <property type="component" value="Segment"/>
</dbReference>
<dbReference type="Proteomes" id="UP000007960">
    <property type="component" value="Segment"/>
</dbReference>
<dbReference type="InterPro" id="IPR009057">
    <property type="entry name" value="Homeodomain-like_sf"/>
</dbReference>
<dbReference type="InterPro" id="IPR010454">
    <property type="entry name" value="Phage_NinH"/>
</dbReference>
<dbReference type="Pfam" id="PF06322">
    <property type="entry name" value="Phage_NinH"/>
    <property type="match status" value="1"/>
</dbReference>
<dbReference type="SUPFAM" id="SSF46689">
    <property type="entry name" value="Homeodomain-like"/>
    <property type="match status" value="1"/>
</dbReference>
<name>NINH_BPP22</name>
<protein>
    <recommendedName>
        <fullName>Protein ninH</fullName>
    </recommendedName>
</protein>
<keyword id="KW-1185">Reference proteome</keyword>
<reference key="1">
    <citation type="submission" date="1994-05" db="EMBL/GenBank/DDBJ databases">
        <title>Nucleotide sequence of PR-operon of P22 is a mosaic of other lambdoid chromosomes and reveals functional implications for the late gene expression.</title>
        <authorList>
            <person name="Kroeger M."/>
            <person name="Hobom G."/>
        </authorList>
    </citation>
    <scope>NUCLEOTIDE SEQUENCE [GENOMIC DNA]</scope>
</reference>
<reference key="2">
    <citation type="journal article" date="2000" name="J. Bacteriol.">
        <title>Sequence of the genome of Salmonella bacteriophage P22.</title>
        <authorList>
            <person name="Vander Byl C.S."/>
            <person name="Kropinski A.M.B."/>
        </authorList>
    </citation>
    <scope>NUCLEOTIDE SEQUENCE [LARGE SCALE GENOMIC DNA]</scope>
</reference>
<reference key="3">
    <citation type="journal article" date="2003" name="J. Bacteriol.">
        <title>Corrected sequence of the bacteriophage P22 genome.</title>
        <authorList>
            <person name="Pedulla M.L."/>
            <person name="Ford M.E."/>
            <person name="Karthikeyan T."/>
            <person name="Houtz J.M."/>
            <person name="Hendrix R.W."/>
            <person name="Hatfull G.F."/>
            <person name="Poteete A.R."/>
            <person name="Gilcrease E.B."/>
            <person name="Winn-Stapley D.A."/>
            <person name="Casjens S.R."/>
        </authorList>
    </citation>
    <scope>NUCLEOTIDE SEQUENCE [LARGE SCALE GENOMIC DNA]</scope>
</reference>